<proteinExistence type="predicted"/>
<organism>
    <name type="scientific">Halalkalibacterium halodurans (strain ATCC BAA-125 / DSM 18197 / FERM 7344 / JCM 9153 / C-125)</name>
    <name type="common">Bacillus halodurans</name>
    <dbReference type="NCBI Taxonomy" id="272558"/>
    <lineage>
        <taxon>Bacteria</taxon>
        <taxon>Bacillati</taxon>
        <taxon>Bacillota</taxon>
        <taxon>Bacilli</taxon>
        <taxon>Bacillales</taxon>
        <taxon>Bacillaceae</taxon>
        <taxon>Halalkalibacterium (ex Joshi et al. 2022)</taxon>
    </lineage>
</organism>
<sequence length="52" mass="6246">MEKTQQQLIHEIEHIRKFLIDLGEDYPLHSHIVVSCSQKLDLLLNEFERTKE</sequence>
<feature type="chain" id="PRO_0000220731" description="Uncharacterized protein BH0262">
    <location>
        <begin position="1"/>
        <end position="52"/>
    </location>
</feature>
<reference key="1">
    <citation type="journal article" date="2000" name="Nucleic Acids Res.">
        <title>Complete genome sequence of the alkaliphilic bacterium Bacillus halodurans and genomic sequence comparison with Bacillus subtilis.</title>
        <authorList>
            <person name="Takami H."/>
            <person name="Nakasone K."/>
            <person name="Takaki Y."/>
            <person name="Maeno G."/>
            <person name="Sasaki R."/>
            <person name="Masui N."/>
            <person name="Fuji F."/>
            <person name="Hirama C."/>
            <person name="Nakamura Y."/>
            <person name="Ogasawara N."/>
            <person name="Kuhara S."/>
            <person name="Horikoshi K."/>
        </authorList>
    </citation>
    <scope>NUCLEOTIDE SEQUENCE [LARGE SCALE GENOMIC DNA]</scope>
    <source>
        <strain>ATCC BAA-125 / DSM 18197 / FERM 7344 / JCM 9153 / C-125</strain>
    </source>
</reference>
<accession>Q9KG51</accession>
<dbReference type="EMBL" id="BA000004">
    <property type="protein sequence ID" value="BAB03981.1"/>
    <property type="molecule type" value="Genomic_DNA"/>
</dbReference>
<dbReference type="PIR" id="F83682">
    <property type="entry name" value="F83682"/>
</dbReference>
<dbReference type="RefSeq" id="WP_010896444.1">
    <property type="nucleotide sequence ID" value="NC_002570.2"/>
</dbReference>
<dbReference type="SMR" id="Q9KG51"/>
<dbReference type="STRING" id="272558.gene:10726115"/>
<dbReference type="GeneID" id="87595822"/>
<dbReference type="KEGG" id="bha:BH0262"/>
<dbReference type="HOGENOM" id="CLU_3076738_0_0_9"/>
<dbReference type="OrthoDB" id="2973153at2"/>
<dbReference type="Proteomes" id="UP000001258">
    <property type="component" value="Chromosome"/>
</dbReference>
<dbReference type="GO" id="GO:0046983">
    <property type="term" value="F:protein dimerization activity"/>
    <property type="evidence" value="ECO:0007669"/>
    <property type="project" value="InterPro"/>
</dbReference>
<dbReference type="GO" id="GO:0043937">
    <property type="term" value="P:regulation of sporulation"/>
    <property type="evidence" value="ECO:0007669"/>
    <property type="project" value="InterPro"/>
</dbReference>
<dbReference type="Gene3D" id="4.10.280.10">
    <property type="entry name" value="Helix-loop-helix DNA-binding domain"/>
    <property type="match status" value="1"/>
</dbReference>
<dbReference type="InterPro" id="IPR036638">
    <property type="entry name" value="HLH_DNA-bd_sf"/>
</dbReference>
<dbReference type="InterPro" id="IPR018540">
    <property type="entry name" value="Spo0E-like"/>
</dbReference>
<dbReference type="InterPro" id="IPR037208">
    <property type="entry name" value="Spo0E-like_sf"/>
</dbReference>
<dbReference type="Pfam" id="PF09388">
    <property type="entry name" value="SpoOE-like"/>
    <property type="match status" value="1"/>
</dbReference>
<dbReference type="SUPFAM" id="SSF140500">
    <property type="entry name" value="BAS1536-like"/>
    <property type="match status" value="1"/>
</dbReference>
<gene>
    <name type="ordered locus">BH0262</name>
</gene>
<protein>
    <recommendedName>
        <fullName>Uncharacterized protein BH0262</fullName>
    </recommendedName>
</protein>
<keyword id="KW-1185">Reference proteome</keyword>
<name>Y262_HALH5</name>